<protein>
    <recommendedName>
        <fullName evidence="1">GTPase Obg</fullName>
        <ecNumber evidence="1">3.6.5.-</ecNumber>
    </recommendedName>
    <alternativeName>
        <fullName evidence="1">GTP-binding protein Obg</fullName>
    </alternativeName>
</protein>
<comment type="function">
    <text evidence="1">An essential GTPase which binds GTP, GDP and possibly (p)ppGpp with moderate affinity, with high nucleotide exchange rates and a fairly low GTP hydrolysis rate. Plays a role in control of the cell cycle, stress response, ribosome biogenesis and in those bacteria that undergo differentiation, in morphogenesis control.</text>
</comment>
<comment type="cofactor">
    <cofactor evidence="1">
        <name>Mg(2+)</name>
        <dbReference type="ChEBI" id="CHEBI:18420"/>
    </cofactor>
</comment>
<comment type="subunit">
    <text evidence="1">Monomer.</text>
</comment>
<comment type="subcellular location">
    <subcellularLocation>
        <location evidence="1">Cytoplasm</location>
    </subcellularLocation>
</comment>
<comment type="similarity">
    <text evidence="1">Belongs to the TRAFAC class OBG-HflX-like GTPase superfamily. OBG GTPase family.</text>
</comment>
<feature type="chain" id="PRO_0000386251" description="GTPase Obg">
    <location>
        <begin position="1"/>
        <end position="388"/>
    </location>
</feature>
<feature type="domain" description="Obg" evidence="2">
    <location>
        <begin position="1"/>
        <end position="159"/>
    </location>
</feature>
<feature type="domain" description="OBG-type G" evidence="1">
    <location>
        <begin position="160"/>
        <end position="333"/>
    </location>
</feature>
<feature type="binding site" evidence="1">
    <location>
        <begin position="166"/>
        <end position="173"/>
    </location>
    <ligand>
        <name>GTP</name>
        <dbReference type="ChEBI" id="CHEBI:37565"/>
    </ligand>
</feature>
<feature type="binding site" evidence="1">
    <location>
        <position position="173"/>
    </location>
    <ligand>
        <name>Mg(2+)</name>
        <dbReference type="ChEBI" id="CHEBI:18420"/>
    </ligand>
</feature>
<feature type="binding site" evidence="1">
    <location>
        <begin position="191"/>
        <end position="195"/>
    </location>
    <ligand>
        <name>GTP</name>
        <dbReference type="ChEBI" id="CHEBI:37565"/>
    </ligand>
</feature>
<feature type="binding site" evidence="1">
    <location>
        <position position="193"/>
    </location>
    <ligand>
        <name>Mg(2+)</name>
        <dbReference type="ChEBI" id="CHEBI:18420"/>
    </ligand>
</feature>
<feature type="binding site" evidence="1">
    <location>
        <begin position="213"/>
        <end position="216"/>
    </location>
    <ligand>
        <name>GTP</name>
        <dbReference type="ChEBI" id="CHEBI:37565"/>
    </ligand>
</feature>
<feature type="binding site" evidence="1">
    <location>
        <begin position="283"/>
        <end position="286"/>
    </location>
    <ligand>
        <name>GTP</name>
        <dbReference type="ChEBI" id="CHEBI:37565"/>
    </ligand>
</feature>
<feature type="binding site" evidence="1">
    <location>
        <begin position="314"/>
        <end position="316"/>
    </location>
    <ligand>
        <name>GTP</name>
        <dbReference type="ChEBI" id="CHEBI:37565"/>
    </ligand>
</feature>
<name>OBG_SHESR</name>
<dbReference type="EC" id="3.6.5.-" evidence="1"/>
<dbReference type="EMBL" id="CP000444">
    <property type="protein sequence ID" value="ABI44107.1"/>
    <property type="molecule type" value="Genomic_DNA"/>
</dbReference>
<dbReference type="SMR" id="Q0HRZ8"/>
<dbReference type="KEGG" id="shm:Shewmr7_3123"/>
<dbReference type="HOGENOM" id="CLU_011747_2_0_6"/>
<dbReference type="GO" id="GO:0005737">
    <property type="term" value="C:cytoplasm"/>
    <property type="evidence" value="ECO:0007669"/>
    <property type="project" value="UniProtKB-SubCell"/>
</dbReference>
<dbReference type="GO" id="GO:0005525">
    <property type="term" value="F:GTP binding"/>
    <property type="evidence" value="ECO:0007669"/>
    <property type="project" value="UniProtKB-UniRule"/>
</dbReference>
<dbReference type="GO" id="GO:0003924">
    <property type="term" value="F:GTPase activity"/>
    <property type="evidence" value="ECO:0007669"/>
    <property type="project" value="UniProtKB-UniRule"/>
</dbReference>
<dbReference type="GO" id="GO:0000287">
    <property type="term" value="F:magnesium ion binding"/>
    <property type="evidence" value="ECO:0007669"/>
    <property type="project" value="InterPro"/>
</dbReference>
<dbReference type="GO" id="GO:0042254">
    <property type="term" value="P:ribosome biogenesis"/>
    <property type="evidence" value="ECO:0007669"/>
    <property type="project" value="UniProtKB-UniRule"/>
</dbReference>
<dbReference type="CDD" id="cd01898">
    <property type="entry name" value="Obg"/>
    <property type="match status" value="1"/>
</dbReference>
<dbReference type="FunFam" id="2.70.210.12:FF:000001">
    <property type="entry name" value="GTPase Obg"/>
    <property type="match status" value="1"/>
</dbReference>
<dbReference type="Gene3D" id="2.70.210.12">
    <property type="entry name" value="GTP1/OBG domain"/>
    <property type="match status" value="1"/>
</dbReference>
<dbReference type="Gene3D" id="3.40.50.300">
    <property type="entry name" value="P-loop containing nucleotide triphosphate hydrolases"/>
    <property type="match status" value="1"/>
</dbReference>
<dbReference type="HAMAP" id="MF_01454">
    <property type="entry name" value="GTPase_Obg"/>
    <property type="match status" value="1"/>
</dbReference>
<dbReference type="InterPro" id="IPR031167">
    <property type="entry name" value="G_OBG"/>
</dbReference>
<dbReference type="InterPro" id="IPR006073">
    <property type="entry name" value="GTP-bd"/>
</dbReference>
<dbReference type="InterPro" id="IPR014100">
    <property type="entry name" value="GTP-bd_Obg/CgtA"/>
</dbReference>
<dbReference type="InterPro" id="IPR006074">
    <property type="entry name" value="GTP1-OBG_CS"/>
</dbReference>
<dbReference type="InterPro" id="IPR006169">
    <property type="entry name" value="GTP1_OBG_dom"/>
</dbReference>
<dbReference type="InterPro" id="IPR036726">
    <property type="entry name" value="GTP1_OBG_dom_sf"/>
</dbReference>
<dbReference type="InterPro" id="IPR045086">
    <property type="entry name" value="OBG_GTPase"/>
</dbReference>
<dbReference type="InterPro" id="IPR027417">
    <property type="entry name" value="P-loop_NTPase"/>
</dbReference>
<dbReference type="NCBIfam" id="TIGR02729">
    <property type="entry name" value="Obg_CgtA"/>
    <property type="match status" value="1"/>
</dbReference>
<dbReference type="NCBIfam" id="NF008955">
    <property type="entry name" value="PRK12297.1"/>
    <property type="match status" value="1"/>
</dbReference>
<dbReference type="NCBIfam" id="NF008956">
    <property type="entry name" value="PRK12299.1"/>
    <property type="match status" value="1"/>
</dbReference>
<dbReference type="PANTHER" id="PTHR11702">
    <property type="entry name" value="DEVELOPMENTALLY REGULATED GTP-BINDING PROTEIN-RELATED"/>
    <property type="match status" value="1"/>
</dbReference>
<dbReference type="PANTHER" id="PTHR11702:SF31">
    <property type="entry name" value="MITOCHONDRIAL RIBOSOME-ASSOCIATED GTPASE 2"/>
    <property type="match status" value="1"/>
</dbReference>
<dbReference type="Pfam" id="PF01018">
    <property type="entry name" value="GTP1_OBG"/>
    <property type="match status" value="1"/>
</dbReference>
<dbReference type="Pfam" id="PF01926">
    <property type="entry name" value="MMR_HSR1"/>
    <property type="match status" value="1"/>
</dbReference>
<dbReference type="PIRSF" id="PIRSF002401">
    <property type="entry name" value="GTP_bd_Obg/CgtA"/>
    <property type="match status" value="1"/>
</dbReference>
<dbReference type="PRINTS" id="PR00326">
    <property type="entry name" value="GTP1OBG"/>
</dbReference>
<dbReference type="SUPFAM" id="SSF82051">
    <property type="entry name" value="Obg GTP-binding protein N-terminal domain"/>
    <property type="match status" value="1"/>
</dbReference>
<dbReference type="SUPFAM" id="SSF52540">
    <property type="entry name" value="P-loop containing nucleoside triphosphate hydrolases"/>
    <property type="match status" value="1"/>
</dbReference>
<dbReference type="PROSITE" id="PS51710">
    <property type="entry name" value="G_OBG"/>
    <property type="match status" value="1"/>
</dbReference>
<dbReference type="PROSITE" id="PS00905">
    <property type="entry name" value="GTP1_OBG"/>
    <property type="match status" value="1"/>
</dbReference>
<dbReference type="PROSITE" id="PS51883">
    <property type="entry name" value="OBG"/>
    <property type="match status" value="1"/>
</dbReference>
<accession>Q0HRZ8</accession>
<gene>
    <name evidence="1" type="primary">obg</name>
    <name type="ordered locus">Shewmr7_3123</name>
</gene>
<evidence type="ECO:0000255" key="1">
    <source>
        <dbReference type="HAMAP-Rule" id="MF_01454"/>
    </source>
</evidence>
<evidence type="ECO:0000255" key="2">
    <source>
        <dbReference type="PROSITE-ProRule" id="PRU01231"/>
    </source>
</evidence>
<proteinExistence type="inferred from homology"/>
<keyword id="KW-0963">Cytoplasm</keyword>
<keyword id="KW-0342">GTP-binding</keyword>
<keyword id="KW-0378">Hydrolase</keyword>
<keyword id="KW-0460">Magnesium</keyword>
<keyword id="KW-0479">Metal-binding</keyword>
<keyword id="KW-0547">Nucleotide-binding</keyword>
<sequence>MKFVDEAVIRVEAGDGGSGCVSFRREKYIPDGGPDGGDGGDGGSVYLQADENHNTLIEYRFERFHMAERGENGRGRDCTGHSGKDLILKVPVGTRAIDDETEEVLGDLTTHGQKLLVAKGGFHGLGNTRFKSSTNRAPRQKTLGTPGEVRSLKLELLLLADVGLLGMPNAGKSTFIRAVSRATPKVADYPFTTLVPNLGVVNPRPGQSFVIADIPGLIEGAAEGAGLGIRFLKHLERCRILLHIIDIEPIDGTDPVDSARAIVGELEKYSPKLASKPRWLVFNKADLLLEDELKEKVARVVKELGWEGDVYTISAYSRDGTKELATKLLDFIQSLPPEDKDANPDAEVEFKWDNYHQANIDAINEDYDDEFDDDFDDDDYDVEVIYQR</sequence>
<organism>
    <name type="scientific">Shewanella sp. (strain MR-7)</name>
    <dbReference type="NCBI Taxonomy" id="60481"/>
    <lineage>
        <taxon>Bacteria</taxon>
        <taxon>Pseudomonadati</taxon>
        <taxon>Pseudomonadota</taxon>
        <taxon>Gammaproteobacteria</taxon>
        <taxon>Alteromonadales</taxon>
        <taxon>Shewanellaceae</taxon>
        <taxon>Shewanella</taxon>
    </lineage>
</organism>
<reference key="1">
    <citation type="submission" date="2006-08" db="EMBL/GenBank/DDBJ databases">
        <title>Complete sequence of chromosome 1 of Shewanella sp. MR-7.</title>
        <authorList>
            <person name="Copeland A."/>
            <person name="Lucas S."/>
            <person name="Lapidus A."/>
            <person name="Barry K."/>
            <person name="Detter J.C."/>
            <person name="Glavina del Rio T."/>
            <person name="Hammon N."/>
            <person name="Israni S."/>
            <person name="Dalin E."/>
            <person name="Tice H."/>
            <person name="Pitluck S."/>
            <person name="Kiss H."/>
            <person name="Brettin T."/>
            <person name="Bruce D."/>
            <person name="Han C."/>
            <person name="Tapia R."/>
            <person name="Gilna P."/>
            <person name="Schmutz J."/>
            <person name="Larimer F."/>
            <person name="Land M."/>
            <person name="Hauser L."/>
            <person name="Kyrpides N."/>
            <person name="Mikhailova N."/>
            <person name="Nealson K."/>
            <person name="Konstantinidis K."/>
            <person name="Klappenbach J."/>
            <person name="Tiedje J."/>
            <person name="Richardson P."/>
        </authorList>
    </citation>
    <scope>NUCLEOTIDE SEQUENCE [LARGE SCALE GENOMIC DNA]</scope>
    <source>
        <strain>MR-7</strain>
    </source>
</reference>